<name>CLPB_CORGL</name>
<keyword id="KW-0067">ATP-binding</keyword>
<keyword id="KW-0143">Chaperone</keyword>
<keyword id="KW-0175">Coiled coil</keyword>
<keyword id="KW-0963">Cytoplasm</keyword>
<keyword id="KW-0547">Nucleotide-binding</keyword>
<keyword id="KW-1185">Reference proteome</keyword>
<keyword id="KW-0677">Repeat</keyword>
<keyword id="KW-0346">Stress response</keyword>
<accession>P53532</accession>
<comment type="function">
    <text evidence="1">Part of a stress-induced multi-chaperone system, it is involved in the recovery of the cell from heat-induced damage, in cooperation with DnaK, DnaJ and GrpE. Acts before DnaK, in the processing of protein aggregates. Protein binding stimulates the ATPase activity; ATP hydrolysis unfolds the denatured protein aggregates, which probably helps expose new hydrophobic binding sites on the surface of ClpB-bound aggregates, contributing to the solubilization and refolding of denatured protein aggregates by DnaK (By similarity). Necessary for survival of C.glutamicum at high temperatures.</text>
</comment>
<comment type="subunit">
    <text evidence="1">Homohexamer. The oligomerization is ATP-dependent (By similarity).</text>
</comment>
<comment type="subcellular location">
    <subcellularLocation>
        <location evidence="3">Cytoplasm</location>
    </subcellularLocation>
</comment>
<comment type="induction">
    <text>By heat shock.</text>
</comment>
<comment type="domain">
    <text evidence="1">The Clp repeat (R) domain probably functions as a substrate-discriminating domain, recruiting aggregated proteins to the ClpB hexamer and/or stabilizing bound proteins. The NBD2 domain is responsible for oligomerization, whereas the NBD1 domain stabilizes the hexamer probably in an ATP-dependent manner. The movement of the coiled-coil domain is essential for ClpB ability to rescue proteins from an aggregated state, probably by pulling apart large aggregated proteins, which are bound between the coiled-coils motifs of adjacent ClpB subunits in the functional hexamer (By similarity).</text>
</comment>
<comment type="similarity">
    <text evidence="3">Belongs to the ClpA/ClpB family.</text>
</comment>
<gene>
    <name type="primary">clpB</name>
    <name type="ordered locus">Cgl2780</name>
    <name type="ordered locus">cg3079</name>
</gene>
<protein>
    <recommendedName>
        <fullName>Chaperone protein ClpB</fullName>
    </recommendedName>
</protein>
<organism>
    <name type="scientific">Corynebacterium glutamicum (strain ATCC 13032 / DSM 20300 / JCM 1318 / BCRC 11384 / CCUG 27702 / LMG 3730 / NBRC 12168 / NCIMB 10025 / NRRL B-2784 / 534)</name>
    <dbReference type="NCBI Taxonomy" id="196627"/>
    <lineage>
        <taxon>Bacteria</taxon>
        <taxon>Bacillati</taxon>
        <taxon>Actinomycetota</taxon>
        <taxon>Actinomycetes</taxon>
        <taxon>Mycobacteriales</taxon>
        <taxon>Corynebacteriaceae</taxon>
        <taxon>Corynebacterium</taxon>
    </lineage>
</organism>
<dbReference type="EMBL" id="U43536">
    <property type="protein sequence ID" value="AAB49540.1"/>
    <property type="molecule type" value="Genomic_DNA"/>
</dbReference>
<dbReference type="EMBL" id="BA000036">
    <property type="protein sequence ID" value="BAC00174.1"/>
    <property type="molecule type" value="Genomic_DNA"/>
</dbReference>
<dbReference type="EMBL" id="BX927156">
    <property type="protein sequence ID" value="CAF20801.1"/>
    <property type="molecule type" value="Genomic_DNA"/>
</dbReference>
<dbReference type="RefSeq" id="NP_601973.1">
    <property type="nucleotide sequence ID" value="NC_003450.3"/>
</dbReference>
<dbReference type="RefSeq" id="WP_011015370.1">
    <property type="nucleotide sequence ID" value="NC_006958.1"/>
</dbReference>
<dbReference type="SMR" id="P53532"/>
<dbReference type="STRING" id="196627.cg3079"/>
<dbReference type="GeneID" id="1020723"/>
<dbReference type="KEGG" id="cgb:cg3079"/>
<dbReference type="KEGG" id="cgl:Cgl2780"/>
<dbReference type="PATRIC" id="fig|196627.13.peg.2711"/>
<dbReference type="eggNOG" id="COG0542">
    <property type="taxonomic scope" value="Bacteria"/>
</dbReference>
<dbReference type="HOGENOM" id="CLU_005070_4_0_11"/>
<dbReference type="OrthoDB" id="9803641at2"/>
<dbReference type="BioCyc" id="CORYNE:G18NG-12397-MONOMER"/>
<dbReference type="Proteomes" id="UP000000582">
    <property type="component" value="Chromosome"/>
</dbReference>
<dbReference type="Proteomes" id="UP000001009">
    <property type="component" value="Chromosome"/>
</dbReference>
<dbReference type="GO" id="GO:0005737">
    <property type="term" value="C:cytoplasm"/>
    <property type="evidence" value="ECO:0007669"/>
    <property type="project" value="UniProtKB-SubCell"/>
</dbReference>
<dbReference type="GO" id="GO:0005524">
    <property type="term" value="F:ATP binding"/>
    <property type="evidence" value="ECO:0007669"/>
    <property type="project" value="UniProtKB-KW"/>
</dbReference>
<dbReference type="GO" id="GO:0016887">
    <property type="term" value="F:ATP hydrolysis activity"/>
    <property type="evidence" value="ECO:0007669"/>
    <property type="project" value="InterPro"/>
</dbReference>
<dbReference type="GO" id="GO:0034605">
    <property type="term" value="P:cellular response to heat"/>
    <property type="evidence" value="ECO:0007669"/>
    <property type="project" value="TreeGrafter"/>
</dbReference>
<dbReference type="GO" id="GO:0042026">
    <property type="term" value="P:protein refolding"/>
    <property type="evidence" value="ECO:0007669"/>
    <property type="project" value="InterPro"/>
</dbReference>
<dbReference type="CDD" id="cd00009">
    <property type="entry name" value="AAA"/>
    <property type="match status" value="1"/>
</dbReference>
<dbReference type="CDD" id="cd19499">
    <property type="entry name" value="RecA-like_ClpB_Hsp104-like"/>
    <property type="match status" value="1"/>
</dbReference>
<dbReference type="FunFam" id="1.10.8.60:FF:000017">
    <property type="entry name" value="ATP-dependent chaperone ClpB"/>
    <property type="match status" value="1"/>
</dbReference>
<dbReference type="FunFam" id="3.40.50.300:FF:000120">
    <property type="entry name" value="ATP-dependent chaperone ClpB"/>
    <property type="match status" value="1"/>
</dbReference>
<dbReference type="FunFam" id="3.40.50.300:FF:000025">
    <property type="entry name" value="ATP-dependent Clp protease subunit"/>
    <property type="match status" value="1"/>
</dbReference>
<dbReference type="FunFam" id="3.40.50.300:FF:000010">
    <property type="entry name" value="Chaperone clpB 1, putative"/>
    <property type="match status" value="1"/>
</dbReference>
<dbReference type="Gene3D" id="1.10.8.60">
    <property type="match status" value="1"/>
</dbReference>
<dbReference type="Gene3D" id="1.10.1780.10">
    <property type="entry name" value="Clp, N-terminal domain"/>
    <property type="match status" value="1"/>
</dbReference>
<dbReference type="Gene3D" id="3.40.50.300">
    <property type="entry name" value="P-loop containing nucleotide triphosphate hydrolases"/>
    <property type="match status" value="3"/>
</dbReference>
<dbReference type="InterPro" id="IPR003593">
    <property type="entry name" value="AAA+_ATPase"/>
</dbReference>
<dbReference type="InterPro" id="IPR003959">
    <property type="entry name" value="ATPase_AAA_core"/>
</dbReference>
<dbReference type="InterPro" id="IPR017730">
    <property type="entry name" value="Chaperonin_ClpB"/>
</dbReference>
<dbReference type="InterPro" id="IPR019489">
    <property type="entry name" value="Clp_ATPase_C"/>
</dbReference>
<dbReference type="InterPro" id="IPR036628">
    <property type="entry name" value="Clp_N_dom_sf"/>
</dbReference>
<dbReference type="InterPro" id="IPR004176">
    <property type="entry name" value="Clp_R_dom"/>
</dbReference>
<dbReference type="InterPro" id="IPR001270">
    <property type="entry name" value="ClpA/B"/>
</dbReference>
<dbReference type="InterPro" id="IPR018368">
    <property type="entry name" value="ClpA/B_CS1"/>
</dbReference>
<dbReference type="InterPro" id="IPR028299">
    <property type="entry name" value="ClpA/B_CS2"/>
</dbReference>
<dbReference type="InterPro" id="IPR041546">
    <property type="entry name" value="ClpA/ClpB_AAA_lid"/>
</dbReference>
<dbReference type="InterPro" id="IPR050130">
    <property type="entry name" value="ClpA_ClpB"/>
</dbReference>
<dbReference type="InterPro" id="IPR027417">
    <property type="entry name" value="P-loop_NTPase"/>
</dbReference>
<dbReference type="NCBIfam" id="TIGR03346">
    <property type="entry name" value="chaperone_ClpB"/>
    <property type="match status" value="1"/>
</dbReference>
<dbReference type="PANTHER" id="PTHR11638">
    <property type="entry name" value="ATP-DEPENDENT CLP PROTEASE"/>
    <property type="match status" value="1"/>
</dbReference>
<dbReference type="PANTHER" id="PTHR11638:SF18">
    <property type="entry name" value="HEAT SHOCK PROTEIN 104"/>
    <property type="match status" value="1"/>
</dbReference>
<dbReference type="Pfam" id="PF00004">
    <property type="entry name" value="AAA"/>
    <property type="match status" value="1"/>
</dbReference>
<dbReference type="Pfam" id="PF07724">
    <property type="entry name" value="AAA_2"/>
    <property type="match status" value="1"/>
</dbReference>
<dbReference type="Pfam" id="PF17871">
    <property type="entry name" value="AAA_lid_9"/>
    <property type="match status" value="1"/>
</dbReference>
<dbReference type="Pfam" id="PF02861">
    <property type="entry name" value="Clp_N"/>
    <property type="match status" value="2"/>
</dbReference>
<dbReference type="Pfam" id="PF10431">
    <property type="entry name" value="ClpB_D2-small"/>
    <property type="match status" value="1"/>
</dbReference>
<dbReference type="PRINTS" id="PR00300">
    <property type="entry name" value="CLPPROTEASEA"/>
</dbReference>
<dbReference type="SMART" id="SM00382">
    <property type="entry name" value="AAA"/>
    <property type="match status" value="2"/>
</dbReference>
<dbReference type="SMART" id="SM01086">
    <property type="entry name" value="ClpB_D2-small"/>
    <property type="match status" value="1"/>
</dbReference>
<dbReference type="SUPFAM" id="SSF81923">
    <property type="entry name" value="Double Clp-N motif"/>
    <property type="match status" value="1"/>
</dbReference>
<dbReference type="SUPFAM" id="SSF52540">
    <property type="entry name" value="P-loop containing nucleoside triphosphate hydrolases"/>
    <property type="match status" value="2"/>
</dbReference>
<dbReference type="PROSITE" id="PS51903">
    <property type="entry name" value="CLP_R"/>
    <property type="match status" value="1"/>
</dbReference>
<dbReference type="PROSITE" id="PS00870">
    <property type="entry name" value="CLPAB_1"/>
    <property type="match status" value="1"/>
</dbReference>
<dbReference type="PROSITE" id="PS00871">
    <property type="entry name" value="CLPAB_2"/>
    <property type="match status" value="1"/>
</dbReference>
<feature type="chain" id="PRO_0000191116" description="Chaperone protein ClpB">
    <location>
        <begin position="1"/>
        <end position="852"/>
    </location>
</feature>
<feature type="domain" description="Clp R" evidence="2">
    <location>
        <begin position="1"/>
        <end position="147"/>
    </location>
</feature>
<feature type="region of interest" description="Repeat 1" evidence="2">
    <location>
        <begin position="6"/>
        <end position="71"/>
    </location>
</feature>
<feature type="region of interest" description="Repeat 2" evidence="2">
    <location>
        <begin position="84"/>
        <end position="147"/>
    </location>
</feature>
<feature type="region of interest" description="NBD1" evidence="1">
    <location>
        <begin position="160"/>
        <end position="342"/>
    </location>
</feature>
<feature type="region of interest" description="Linker" evidence="1">
    <location>
        <begin position="343"/>
        <end position="548"/>
    </location>
</feature>
<feature type="region of interest" description="NBD2" evidence="1">
    <location>
        <begin position="558"/>
        <end position="756"/>
    </location>
</feature>
<feature type="region of interest" description="C-terminal" evidence="1">
    <location>
        <begin position="757"/>
        <end position="852"/>
    </location>
</feature>
<feature type="coiled-coil region" evidence="1">
    <location>
        <begin position="393"/>
        <end position="527"/>
    </location>
</feature>
<feature type="binding site" evidence="1">
    <location>
        <begin position="207"/>
        <end position="214"/>
    </location>
    <ligand>
        <name>ATP</name>
        <dbReference type="ChEBI" id="CHEBI:30616"/>
        <label>1</label>
    </ligand>
</feature>
<feature type="binding site" evidence="1">
    <location>
        <begin position="608"/>
        <end position="615"/>
    </location>
    <ligand>
        <name>ATP</name>
        <dbReference type="ChEBI" id="CHEBI:30616"/>
        <label>2</label>
    </ligand>
</feature>
<evidence type="ECO:0000250" key="1"/>
<evidence type="ECO:0000255" key="2">
    <source>
        <dbReference type="PROSITE-ProRule" id="PRU01251"/>
    </source>
</evidence>
<evidence type="ECO:0000305" key="3"/>
<sequence length="852" mass="93232">MSSFNPTTKTNEAMQAALQQASSAGNPDIRPAHLLAAILEQTDGVAAPVLMATGVDPKEILAEAKKLVASYPKASGANMANPNFNRDALNAFTAAQELAGELGDEYVSTEVLLAGIARGKSDAADLLTNKGATYDAIKEAFPSVRGSQRVTTQDPEGQFQALEKYSTDLTKLAREGKIDPVIGRDQEIRRVVQVLSRRTKNNPVLIGEPGVGKTAIVEGLARRIVAGDVPESLKGKTLISLDLGSMVAGAKYRGEFEERLKAVLDEIKGANGEVVTFIDELHTIVGAGASGESAMDAGNMIKPLLARGELRLVGATTLNEYRKYIEKDAALERRFQQVYVGEPTVEDAIGILRGLKERYEVHHGVRIQDSALVAAAELSNRYITSRFLPDKAIDLVDEAASRLRMEIDSSPQEIDELERIVRRLEIEEMALSKESDAASKERLEKLRSELADEREKLSELKARWQNEKTAIDDVREMKEELEALRSESDIAERDGNYGRVAELRYGRIPELEKQIEDAESKVEVNENAMLTEEVTPDTIADVVSAWTGIPAGKMMQGETEKLLNMERVLGNRVVGQLEAVTAVSDAVRRSRAGVADPNRPTGSFLFLGPTGVGKTELAKAVAEFLFDDDRAMIRIDMSEYGEKHSVARLVGAPPGYVGYDQGGQLTEAVRRRPYTVVLFDEVEKAHPDVFDILLQVLDEGRLTDGQGRTVDFRNTILILTSNLGAGGTREQMMDAVKMAFKPEFVNRLDDVVIFDRLSPEQLTSIVDIQIKQLTDRLAGRRLNLRVSDSAKAWLAERGYDPAYGARPLRRLIQQAIGDTLAKELLAGNVRDGDGVLVDVADGGQKLDVSRAV</sequence>
<proteinExistence type="evidence at transcript level"/>
<reference key="1">
    <citation type="submission" date="1995-12" db="EMBL/GenBank/DDBJ databases">
        <authorList>
            <person name="Jaeger W."/>
        </authorList>
    </citation>
    <scope>NUCLEOTIDE SEQUENCE [GENOMIC DNA]</scope>
    <source>
        <strain>ATCC 13032 / DSM 20300 / JCM 1318 / BCRC 11384 / CCUG 27702 / LMG 3730 / NBRC 12168 / NCIMB 10025 / NRRL B-2784 / 534</strain>
    </source>
</reference>
<reference key="2">
    <citation type="journal article" date="2003" name="Appl. Microbiol. Biotechnol.">
        <title>The Corynebacterium glutamicum genome: features and impacts on biotechnological processes.</title>
        <authorList>
            <person name="Ikeda M."/>
            <person name="Nakagawa S."/>
        </authorList>
    </citation>
    <scope>NUCLEOTIDE SEQUENCE [LARGE SCALE GENOMIC DNA]</scope>
    <source>
        <strain>ATCC 13032 / DSM 20300 / JCM 1318 / BCRC 11384 / CCUG 27702 / LMG 3730 / NBRC 12168 / NCIMB 10025 / NRRL B-2784 / 534</strain>
    </source>
</reference>
<reference key="3">
    <citation type="journal article" date="2003" name="J. Biotechnol.">
        <title>The complete Corynebacterium glutamicum ATCC 13032 genome sequence and its impact on the production of L-aspartate-derived amino acids and vitamins.</title>
        <authorList>
            <person name="Kalinowski J."/>
            <person name="Bathe B."/>
            <person name="Bartels D."/>
            <person name="Bischoff N."/>
            <person name="Bott M."/>
            <person name="Burkovski A."/>
            <person name="Dusch N."/>
            <person name="Eggeling L."/>
            <person name="Eikmanns B.J."/>
            <person name="Gaigalat L."/>
            <person name="Goesmann A."/>
            <person name="Hartmann M."/>
            <person name="Huthmacher K."/>
            <person name="Kraemer R."/>
            <person name="Linke B."/>
            <person name="McHardy A.C."/>
            <person name="Meyer F."/>
            <person name="Moeckel B."/>
            <person name="Pfefferle W."/>
            <person name="Puehler A."/>
            <person name="Rey D.A."/>
            <person name="Rueckert C."/>
            <person name="Rupp O."/>
            <person name="Sahm H."/>
            <person name="Wendisch V.F."/>
            <person name="Wiegraebe I."/>
            <person name="Tauch A."/>
        </authorList>
    </citation>
    <scope>NUCLEOTIDE SEQUENCE [LARGE SCALE GENOMIC DNA]</scope>
    <source>
        <strain>ATCC 13032 / DSM 20300 / JCM 1318 / BCRC 11384 / CCUG 27702 / LMG 3730 / NBRC 12168 / NCIMB 10025 / NRRL B-2784 / 534</strain>
    </source>
</reference>